<accession>Q83K95</accession>
<accession>Q7UC48</accession>
<gene>
    <name evidence="1" type="primary">fadI</name>
    <name type="ordered locus">SF2420</name>
    <name type="ordered locus">S2555</name>
</gene>
<name>FADI_SHIFL</name>
<comment type="function">
    <text evidence="1">Catalyzes the final step of fatty acid oxidation in which acetyl-CoA is released and the CoA ester of a fatty acid two carbons shorter is formed.</text>
</comment>
<comment type="catalytic activity">
    <reaction evidence="1">
        <text>an acyl-CoA + acetyl-CoA = a 3-oxoacyl-CoA + CoA</text>
        <dbReference type="Rhea" id="RHEA:21564"/>
        <dbReference type="ChEBI" id="CHEBI:57287"/>
        <dbReference type="ChEBI" id="CHEBI:57288"/>
        <dbReference type="ChEBI" id="CHEBI:58342"/>
        <dbReference type="ChEBI" id="CHEBI:90726"/>
        <dbReference type="EC" id="2.3.1.16"/>
    </reaction>
</comment>
<comment type="pathway">
    <text evidence="1">Lipid metabolism; fatty acid beta-oxidation.</text>
</comment>
<comment type="subunit">
    <text evidence="1">Heterotetramer of two alpha chains (FadJ) and two beta chains (FadI).</text>
</comment>
<comment type="subcellular location">
    <subcellularLocation>
        <location evidence="1">Cytoplasm</location>
    </subcellularLocation>
</comment>
<comment type="similarity">
    <text evidence="1">Belongs to the thiolase-like superfamily. Thiolase family.</text>
</comment>
<evidence type="ECO:0000255" key="1">
    <source>
        <dbReference type="HAMAP-Rule" id="MF_01618"/>
    </source>
</evidence>
<evidence type="ECO:0000305" key="2"/>
<reference key="1">
    <citation type="journal article" date="2002" name="Nucleic Acids Res.">
        <title>Genome sequence of Shigella flexneri 2a: insights into pathogenicity through comparison with genomes of Escherichia coli K12 and O157.</title>
        <authorList>
            <person name="Jin Q."/>
            <person name="Yuan Z."/>
            <person name="Xu J."/>
            <person name="Wang Y."/>
            <person name="Shen Y."/>
            <person name="Lu W."/>
            <person name="Wang J."/>
            <person name="Liu H."/>
            <person name="Yang J."/>
            <person name="Yang F."/>
            <person name="Zhang X."/>
            <person name="Zhang J."/>
            <person name="Yang G."/>
            <person name="Wu H."/>
            <person name="Qu D."/>
            <person name="Dong J."/>
            <person name="Sun L."/>
            <person name="Xue Y."/>
            <person name="Zhao A."/>
            <person name="Gao Y."/>
            <person name="Zhu J."/>
            <person name="Kan B."/>
            <person name="Ding K."/>
            <person name="Chen S."/>
            <person name="Cheng H."/>
            <person name="Yao Z."/>
            <person name="He B."/>
            <person name="Chen R."/>
            <person name="Ma D."/>
            <person name="Qiang B."/>
            <person name="Wen Y."/>
            <person name="Hou Y."/>
            <person name="Yu J."/>
        </authorList>
    </citation>
    <scope>NUCLEOTIDE SEQUENCE [LARGE SCALE GENOMIC DNA]</scope>
    <source>
        <strain>301 / Serotype 2a</strain>
    </source>
</reference>
<reference key="2">
    <citation type="journal article" date="2003" name="Infect. Immun.">
        <title>Complete genome sequence and comparative genomics of Shigella flexneri serotype 2a strain 2457T.</title>
        <authorList>
            <person name="Wei J."/>
            <person name="Goldberg M.B."/>
            <person name="Burland V."/>
            <person name="Venkatesan M.M."/>
            <person name="Deng W."/>
            <person name="Fournier G."/>
            <person name="Mayhew G.F."/>
            <person name="Plunkett G. III"/>
            <person name="Rose D.J."/>
            <person name="Darling A."/>
            <person name="Mau B."/>
            <person name="Perna N.T."/>
            <person name="Payne S.M."/>
            <person name="Runyen-Janecky L.J."/>
            <person name="Zhou S."/>
            <person name="Schwartz D.C."/>
            <person name="Blattner F.R."/>
        </authorList>
    </citation>
    <scope>NUCLEOTIDE SEQUENCE [LARGE SCALE GENOMIC DNA]</scope>
    <source>
        <strain>ATCC 700930 / 2457T / Serotype 2a</strain>
    </source>
</reference>
<proteinExistence type="inferred from homology"/>
<feature type="chain" id="PRO_0000206448" description="3-ketoacyl-CoA thiolase">
    <location>
        <begin position="1"/>
        <end position="436"/>
    </location>
</feature>
<feature type="active site" description="Acyl-thioester intermediate" evidence="1">
    <location>
        <position position="99"/>
    </location>
</feature>
<feature type="active site" description="Proton acceptor" evidence="1">
    <location>
        <position position="392"/>
    </location>
</feature>
<feature type="active site" description="Proton acceptor" evidence="1">
    <location>
        <position position="422"/>
    </location>
</feature>
<feature type="sequence conflict" description="In Ref. 2; AAP17744." evidence="2" ref="2">
    <original>T</original>
    <variation>A</variation>
    <location>
        <position position="280"/>
    </location>
</feature>
<keyword id="KW-0012">Acyltransferase</keyword>
<keyword id="KW-0963">Cytoplasm</keyword>
<keyword id="KW-0276">Fatty acid metabolism</keyword>
<keyword id="KW-0442">Lipid degradation</keyword>
<keyword id="KW-0443">Lipid metabolism</keyword>
<keyword id="KW-1185">Reference proteome</keyword>
<keyword id="KW-0808">Transferase</keyword>
<organism>
    <name type="scientific">Shigella flexneri</name>
    <dbReference type="NCBI Taxonomy" id="623"/>
    <lineage>
        <taxon>Bacteria</taxon>
        <taxon>Pseudomonadati</taxon>
        <taxon>Pseudomonadota</taxon>
        <taxon>Gammaproteobacteria</taxon>
        <taxon>Enterobacterales</taxon>
        <taxon>Enterobacteriaceae</taxon>
        <taxon>Shigella</taxon>
    </lineage>
</organism>
<dbReference type="EC" id="2.3.1.16" evidence="1"/>
<dbReference type="EMBL" id="AE005674">
    <property type="protein sequence ID" value="AAN43931.1"/>
    <property type="molecule type" value="Genomic_DNA"/>
</dbReference>
<dbReference type="EMBL" id="AE014073">
    <property type="protein sequence ID" value="AAP17744.1"/>
    <property type="molecule type" value="Genomic_DNA"/>
</dbReference>
<dbReference type="RefSeq" id="NP_708224.1">
    <property type="nucleotide sequence ID" value="NC_004337.2"/>
</dbReference>
<dbReference type="RefSeq" id="WP_000531986.1">
    <property type="nucleotide sequence ID" value="NZ_CP123365.1"/>
</dbReference>
<dbReference type="SMR" id="Q83K95"/>
<dbReference type="STRING" id="198214.SF2420"/>
<dbReference type="PaxDb" id="198214-SF2420"/>
<dbReference type="GeneID" id="1025570"/>
<dbReference type="KEGG" id="sfl:SF2420"/>
<dbReference type="KEGG" id="sfx:S2555"/>
<dbReference type="PATRIC" id="fig|198214.7.peg.2890"/>
<dbReference type="HOGENOM" id="CLU_031026_2_0_6"/>
<dbReference type="UniPathway" id="UPA00659"/>
<dbReference type="Proteomes" id="UP000001006">
    <property type="component" value="Chromosome"/>
</dbReference>
<dbReference type="Proteomes" id="UP000002673">
    <property type="component" value="Chromosome"/>
</dbReference>
<dbReference type="GO" id="GO:0005829">
    <property type="term" value="C:cytosol"/>
    <property type="evidence" value="ECO:0007669"/>
    <property type="project" value="TreeGrafter"/>
</dbReference>
<dbReference type="GO" id="GO:0003988">
    <property type="term" value="F:acetyl-CoA C-acyltransferase activity"/>
    <property type="evidence" value="ECO:0007669"/>
    <property type="project" value="UniProtKB-UniRule"/>
</dbReference>
<dbReference type="GO" id="GO:0006635">
    <property type="term" value="P:fatty acid beta-oxidation"/>
    <property type="evidence" value="ECO:0007669"/>
    <property type="project" value="UniProtKB-UniRule"/>
</dbReference>
<dbReference type="CDD" id="cd00751">
    <property type="entry name" value="thiolase"/>
    <property type="match status" value="1"/>
</dbReference>
<dbReference type="FunFam" id="3.40.47.10:FF:000011">
    <property type="entry name" value="3-ketoacyl-CoA thiolase"/>
    <property type="match status" value="1"/>
</dbReference>
<dbReference type="Gene3D" id="3.40.47.10">
    <property type="match status" value="1"/>
</dbReference>
<dbReference type="HAMAP" id="MF_01618">
    <property type="entry name" value="FadI"/>
    <property type="match status" value="1"/>
</dbReference>
<dbReference type="InterPro" id="IPR012806">
    <property type="entry name" value="Ac-CoA_C-AcTrfase_FadI"/>
</dbReference>
<dbReference type="InterPro" id="IPR002155">
    <property type="entry name" value="Thiolase"/>
</dbReference>
<dbReference type="InterPro" id="IPR016039">
    <property type="entry name" value="Thiolase-like"/>
</dbReference>
<dbReference type="InterPro" id="IPR020615">
    <property type="entry name" value="Thiolase_acyl_enz_int_AS"/>
</dbReference>
<dbReference type="InterPro" id="IPR020610">
    <property type="entry name" value="Thiolase_AS"/>
</dbReference>
<dbReference type="InterPro" id="IPR020617">
    <property type="entry name" value="Thiolase_C"/>
</dbReference>
<dbReference type="InterPro" id="IPR020613">
    <property type="entry name" value="Thiolase_CS"/>
</dbReference>
<dbReference type="InterPro" id="IPR020616">
    <property type="entry name" value="Thiolase_N"/>
</dbReference>
<dbReference type="NCBIfam" id="TIGR01930">
    <property type="entry name" value="AcCoA-C-Actrans"/>
    <property type="match status" value="1"/>
</dbReference>
<dbReference type="NCBIfam" id="TIGR02446">
    <property type="entry name" value="FadI"/>
    <property type="match status" value="1"/>
</dbReference>
<dbReference type="NCBIfam" id="NF006516">
    <property type="entry name" value="PRK08963.1"/>
    <property type="match status" value="1"/>
</dbReference>
<dbReference type="PANTHER" id="PTHR18919:SF107">
    <property type="entry name" value="ACETYL-COA ACETYLTRANSFERASE, CYTOSOLIC"/>
    <property type="match status" value="1"/>
</dbReference>
<dbReference type="PANTHER" id="PTHR18919">
    <property type="entry name" value="ACETYL-COA C-ACYLTRANSFERASE"/>
    <property type="match status" value="1"/>
</dbReference>
<dbReference type="Pfam" id="PF02803">
    <property type="entry name" value="Thiolase_C"/>
    <property type="match status" value="1"/>
</dbReference>
<dbReference type="Pfam" id="PF00108">
    <property type="entry name" value="Thiolase_N"/>
    <property type="match status" value="1"/>
</dbReference>
<dbReference type="PIRSF" id="PIRSF000429">
    <property type="entry name" value="Ac-CoA_Ac_transf"/>
    <property type="match status" value="1"/>
</dbReference>
<dbReference type="SUPFAM" id="SSF53901">
    <property type="entry name" value="Thiolase-like"/>
    <property type="match status" value="2"/>
</dbReference>
<dbReference type="PROSITE" id="PS00098">
    <property type="entry name" value="THIOLASE_1"/>
    <property type="match status" value="1"/>
</dbReference>
<dbReference type="PROSITE" id="PS00737">
    <property type="entry name" value="THIOLASE_2"/>
    <property type="match status" value="1"/>
</dbReference>
<dbReference type="PROSITE" id="PS00099">
    <property type="entry name" value="THIOLASE_3"/>
    <property type="match status" value="1"/>
</dbReference>
<sequence>MGQVLPLVTRQGDRIAIVSGLRTPFARQATAFHGIPTVDLGKMVVGELLARSEIPAEVIEQLVFGQVVQMPEAPNIAREIVLGTGMNVHTDAYSVSRACATSFQAVANVAESLMAGTIRAGIAGGADSSSVLPIGVSKKLAYVLVDVNKARTMSQRLKLFSRLRLRDLMPVPPAVAEYSTGLRMGDTAEQMAKTYGITREQQDALAHRSHQRAAQAWSDGKLKEEVMTAFIPPYKQPLVEDNNIRGNSSLADYAKLRPAFDRKHGTVTAANSTPLTDGATAVILMTESRAKELGLVPLGYLRSYAFTAIDVWQDMLLGPAWSTPLALERAGLTMSELTLIDMHEAFAAQTLANIQLLGSERFAREVLGRAHATGEVDDSKFNVLGGSIAYGHPFAATGARMITQTLHELRRRGGGFGLVTACAAGGLGAAMVLEAE</sequence>
<protein>
    <recommendedName>
        <fullName evidence="1">3-ketoacyl-CoA thiolase</fullName>
        <ecNumber evidence="1">2.3.1.16</ecNumber>
    </recommendedName>
    <alternativeName>
        <fullName evidence="1">ACSs</fullName>
    </alternativeName>
    <alternativeName>
        <fullName evidence="1">Acetyl-CoA acyltransferase</fullName>
    </alternativeName>
    <alternativeName>
        <fullName evidence="1">Acyl-CoA ligase</fullName>
    </alternativeName>
    <alternativeName>
        <fullName evidence="1">Beta-ketothiolase</fullName>
    </alternativeName>
    <alternativeName>
        <fullName evidence="1">Fatty acid oxidation complex subunit beta</fullName>
    </alternativeName>
</protein>